<sequence>MKEYKLENIRNFSIIAHIDHGKSTIADRLLESTSTVEQREMREQLLDSMDLERERGITIKAHPVTMYYEYNGEVYQLNLIDTPGHVDFSYEVSRSLAACEGALLIVDAAQGVQAQSLANVYLALERDLEIIPILNKIDLPAANPERIRKQIEDYIGLDTTHAIACSAKTGEGISEILEAIIELIPPPKLPEETELKALIFDSHYDPYVGIMVYVRVISGEIKKGDRITFMATKGSAFEVLGVGAFLPEATLIEGSLRAGQVGYFIANLKKVKDVKIGDTVTTVKHPAKVPLDGFKEINPVVFAGIYPIDSSDFDTLKDALGRLQLNDSALTIEQESSHSLGFGFRCGFLGLLHLEIVFERIIREFDLDIIATAPSVIYKIVLKNGKTLFIDNPTAYPDPSIIEHLEEPWVHVNIITPQEYLSSIMNLCLDKRGVCLKTEMLDQHRLVLSYDLPLNEIVSDFNDKLKSVTKGYGSFDYRLGDYRKGSIIKLEILINDEPVDAFSCLVHRDKAEARGRSICEKLVDVIPQQLFKIPIQAAINKKVIARETIRALSKNVTAKCYGGDITRKRKLWEKQKKGKKRMKEFGKVSIPNTAFIEVLKID</sequence>
<keyword id="KW-0997">Cell inner membrane</keyword>
<keyword id="KW-1003">Cell membrane</keyword>
<keyword id="KW-0342">GTP-binding</keyword>
<keyword id="KW-0378">Hydrolase</keyword>
<keyword id="KW-0472">Membrane</keyword>
<keyword id="KW-0547">Nucleotide-binding</keyword>
<keyword id="KW-0648">Protein biosynthesis</keyword>
<evidence type="ECO:0000255" key="1">
    <source>
        <dbReference type="HAMAP-Rule" id="MF_00071"/>
    </source>
</evidence>
<organism>
    <name type="scientific">Chlamydia caviae (strain ATCC VR-813 / DSM 19441 / 03DC25 / GPIC)</name>
    <name type="common">Chlamydophila caviae</name>
    <dbReference type="NCBI Taxonomy" id="227941"/>
    <lineage>
        <taxon>Bacteria</taxon>
        <taxon>Pseudomonadati</taxon>
        <taxon>Chlamydiota</taxon>
        <taxon>Chlamydiia</taxon>
        <taxon>Chlamydiales</taxon>
        <taxon>Chlamydiaceae</taxon>
        <taxon>Chlamydia/Chlamydophila group</taxon>
        <taxon>Chlamydia</taxon>
    </lineage>
</organism>
<reference key="1">
    <citation type="journal article" date="2003" name="Nucleic Acids Res.">
        <title>Genome sequence of Chlamydophila caviae (Chlamydia psittaci GPIC): examining the role of niche-specific genes in the evolution of the Chlamydiaceae.</title>
        <authorList>
            <person name="Read T.D."/>
            <person name="Myers G.S.A."/>
            <person name="Brunham R.C."/>
            <person name="Nelson W.C."/>
            <person name="Paulsen I.T."/>
            <person name="Heidelberg J.F."/>
            <person name="Holtzapple E.K."/>
            <person name="Khouri H.M."/>
            <person name="Federova N.B."/>
            <person name="Carty H.A."/>
            <person name="Umayam L.A."/>
            <person name="Haft D.H."/>
            <person name="Peterson J.D."/>
            <person name="Beanan M.J."/>
            <person name="White O."/>
            <person name="Salzberg S.L."/>
            <person name="Hsia R.-C."/>
            <person name="McClarty G."/>
            <person name="Rank R.G."/>
            <person name="Bavoil P.M."/>
            <person name="Fraser C.M."/>
        </authorList>
    </citation>
    <scope>NUCLEOTIDE SEQUENCE [LARGE SCALE GENOMIC DNA]</scope>
    <source>
        <strain>ATCC VR-813 / DSM 19441 / 03DC25 / GPIC</strain>
    </source>
</reference>
<name>LEPA_CHLCV</name>
<proteinExistence type="inferred from homology"/>
<accession>Q823H7</accession>
<dbReference type="EC" id="3.6.5.n1" evidence="1"/>
<dbReference type="EMBL" id="AE015925">
    <property type="protein sequence ID" value="AAP05179.1"/>
    <property type="molecule type" value="Genomic_DNA"/>
</dbReference>
<dbReference type="RefSeq" id="WP_011006395.1">
    <property type="nucleotide sequence ID" value="NC_003361.3"/>
</dbReference>
<dbReference type="SMR" id="Q823H7"/>
<dbReference type="STRING" id="227941.CCA_00433"/>
<dbReference type="KEGG" id="cca:CCA_00433"/>
<dbReference type="eggNOG" id="COG0481">
    <property type="taxonomic scope" value="Bacteria"/>
</dbReference>
<dbReference type="HOGENOM" id="CLU_009995_3_3_0"/>
<dbReference type="OrthoDB" id="9804431at2"/>
<dbReference type="Proteomes" id="UP000002193">
    <property type="component" value="Chromosome"/>
</dbReference>
<dbReference type="GO" id="GO:0005886">
    <property type="term" value="C:plasma membrane"/>
    <property type="evidence" value="ECO:0007669"/>
    <property type="project" value="UniProtKB-SubCell"/>
</dbReference>
<dbReference type="GO" id="GO:0005525">
    <property type="term" value="F:GTP binding"/>
    <property type="evidence" value="ECO:0007669"/>
    <property type="project" value="UniProtKB-UniRule"/>
</dbReference>
<dbReference type="GO" id="GO:0003924">
    <property type="term" value="F:GTPase activity"/>
    <property type="evidence" value="ECO:0007669"/>
    <property type="project" value="UniProtKB-UniRule"/>
</dbReference>
<dbReference type="GO" id="GO:0043022">
    <property type="term" value="F:ribosome binding"/>
    <property type="evidence" value="ECO:0007669"/>
    <property type="project" value="UniProtKB-UniRule"/>
</dbReference>
<dbReference type="GO" id="GO:0003746">
    <property type="term" value="F:translation elongation factor activity"/>
    <property type="evidence" value="ECO:0007669"/>
    <property type="project" value="UniProtKB-UniRule"/>
</dbReference>
<dbReference type="GO" id="GO:0045727">
    <property type="term" value="P:positive regulation of translation"/>
    <property type="evidence" value="ECO:0007669"/>
    <property type="project" value="UniProtKB-UniRule"/>
</dbReference>
<dbReference type="CDD" id="cd03699">
    <property type="entry name" value="EF4_II"/>
    <property type="match status" value="1"/>
</dbReference>
<dbReference type="CDD" id="cd16260">
    <property type="entry name" value="EF4_III"/>
    <property type="match status" value="1"/>
</dbReference>
<dbReference type="CDD" id="cd01890">
    <property type="entry name" value="LepA"/>
    <property type="match status" value="1"/>
</dbReference>
<dbReference type="CDD" id="cd03709">
    <property type="entry name" value="lepA_C"/>
    <property type="match status" value="1"/>
</dbReference>
<dbReference type="FunFam" id="3.40.50.300:FF:000078">
    <property type="entry name" value="Elongation factor 4"/>
    <property type="match status" value="1"/>
</dbReference>
<dbReference type="FunFam" id="2.40.30.10:FF:000015">
    <property type="entry name" value="Translation factor GUF1, mitochondrial"/>
    <property type="match status" value="1"/>
</dbReference>
<dbReference type="FunFam" id="3.30.70.240:FF:000007">
    <property type="entry name" value="Translation factor GUF1, mitochondrial"/>
    <property type="match status" value="1"/>
</dbReference>
<dbReference type="FunFam" id="3.30.70.2570:FF:000001">
    <property type="entry name" value="Translation factor GUF1, mitochondrial"/>
    <property type="match status" value="1"/>
</dbReference>
<dbReference type="FunFam" id="3.30.70.870:FF:000004">
    <property type="entry name" value="Translation factor GUF1, mitochondrial"/>
    <property type="match status" value="1"/>
</dbReference>
<dbReference type="Gene3D" id="3.30.70.240">
    <property type="match status" value="1"/>
</dbReference>
<dbReference type="Gene3D" id="3.30.70.2570">
    <property type="entry name" value="Elongation factor 4, C-terminal domain"/>
    <property type="match status" value="1"/>
</dbReference>
<dbReference type="Gene3D" id="3.30.70.870">
    <property type="entry name" value="Elongation Factor G (Translational Gtpase), domain 3"/>
    <property type="match status" value="1"/>
</dbReference>
<dbReference type="Gene3D" id="3.40.50.300">
    <property type="entry name" value="P-loop containing nucleotide triphosphate hydrolases"/>
    <property type="match status" value="1"/>
</dbReference>
<dbReference type="Gene3D" id="2.40.30.10">
    <property type="entry name" value="Translation factors"/>
    <property type="match status" value="1"/>
</dbReference>
<dbReference type="HAMAP" id="MF_00071">
    <property type="entry name" value="LepA"/>
    <property type="match status" value="1"/>
</dbReference>
<dbReference type="InterPro" id="IPR006297">
    <property type="entry name" value="EF-4"/>
</dbReference>
<dbReference type="InterPro" id="IPR035647">
    <property type="entry name" value="EFG_III/V"/>
</dbReference>
<dbReference type="InterPro" id="IPR000640">
    <property type="entry name" value="EFG_V-like"/>
</dbReference>
<dbReference type="InterPro" id="IPR004161">
    <property type="entry name" value="EFTu-like_2"/>
</dbReference>
<dbReference type="InterPro" id="IPR038363">
    <property type="entry name" value="LepA_C_sf"/>
</dbReference>
<dbReference type="InterPro" id="IPR013842">
    <property type="entry name" value="LepA_CTD"/>
</dbReference>
<dbReference type="InterPro" id="IPR035654">
    <property type="entry name" value="LepA_IV"/>
</dbReference>
<dbReference type="InterPro" id="IPR027417">
    <property type="entry name" value="P-loop_NTPase"/>
</dbReference>
<dbReference type="InterPro" id="IPR005225">
    <property type="entry name" value="Small_GTP-bd"/>
</dbReference>
<dbReference type="InterPro" id="IPR000795">
    <property type="entry name" value="T_Tr_GTP-bd_dom"/>
</dbReference>
<dbReference type="InterPro" id="IPR009000">
    <property type="entry name" value="Transl_B-barrel_sf"/>
</dbReference>
<dbReference type="NCBIfam" id="TIGR01393">
    <property type="entry name" value="lepA"/>
    <property type="match status" value="1"/>
</dbReference>
<dbReference type="NCBIfam" id="TIGR00231">
    <property type="entry name" value="small_GTP"/>
    <property type="match status" value="1"/>
</dbReference>
<dbReference type="PANTHER" id="PTHR43512:SF4">
    <property type="entry name" value="TRANSLATION FACTOR GUF1 HOMOLOG, CHLOROPLASTIC"/>
    <property type="match status" value="1"/>
</dbReference>
<dbReference type="PANTHER" id="PTHR43512">
    <property type="entry name" value="TRANSLATION FACTOR GUF1-RELATED"/>
    <property type="match status" value="1"/>
</dbReference>
<dbReference type="Pfam" id="PF00679">
    <property type="entry name" value="EFG_C"/>
    <property type="match status" value="1"/>
</dbReference>
<dbReference type="Pfam" id="PF00009">
    <property type="entry name" value="GTP_EFTU"/>
    <property type="match status" value="1"/>
</dbReference>
<dbReference type="Pfam" id="PF03144">
    <property type="entry name" value="GTP_EFTU_D2"/>
    <property type="match status" value="1"/>
</dbReference>
<dbReference type="Pfam" id="PF06421">
    <property type="entry name" value="LepA_C"/>
    <property type="match status" value="1"/>
</dbReference>
<dbReference type="PRINTS" id="PR00315">
    <property type="entry name" value="ELONGATNFCT"/>
</dbReference>
<dbReference type="SUPFAM" id="SSF54980">
    <property type="entry name" value="EF-G C-terminal domain-like"/>
    <property type="match status" value="2"/>
</dbReference>
<dbReference type="SUPFAM" id="SSF52540">
    <property type="entry name" value="P-loop containing nucleoside triphosphate hydrolases"/>
    <property type="match status" value="1"/>
</dbReference>
<dbReference type="SUPFAM" id="SSF50447">
    <property type="entry name" value="Translation proteins"/>
    <property type="match status" value="1"/>
</dbReference>
<dbReference type="PROSITE" id="PS51722">
    <property type="entry name" value="G_TR_2"/>
    <property type="match status" value="1"/>
</dbReference>
<protein>
    <recommendedName>
        <fullName evidence="1">Elongation factor 4</fullName>
        <shortName evidence="1">EF-4</shortName>
        <ecNumber evidence="1">3.6.5.n1</ecNumber>
    </recommendedName>
    <alternativeName>
        <fullName evidence="1">Ribosomal back-translocase LepA</fullName>
    </alternativeName>
</protein>
<comment type="function">
    <text evidence="1">Required for accurate and efficient protein synthesis under certain stress conditions. May act as a fidelity factor of the translation reaction, by catalyzing a one-codon backward translocation of tRNAs on improperly translocated ribosomes. Back-translocation proceeds from a post-translocation (POST) complex to a pre-translocation (PRE) complex, thus giving elongation factor G a second chance to translocate the tRNAs correctly. Binds to ribosomes in a GTP-dependent manner.</text>
</comment>
<comment type="catalytic activity">
    <reaction evidence="1">
        <text>GTP + H2O = GDP + phosphate + H(+)</text>
        <dbReference type="Rhea" id="RHEA:19669"/>
        <dbReference type="ChEBI" id="CHEBI:15377"/>
        <dbReference type="ChEBI" id="CHEBI:15378"/>
        <dbReference type="ChEBI" id="CHEBI:37565"/>
        <dbReference type="ChEBI" id="CHEBI:43474"/>
        <dbReference type="ChEBI" id="CHEBI:58189"/>
        <dbReference type="EC" id="3.6.5.n1"/>
    </reaction>
</comment>
<comment type="subcellular location">
    <subcellularLocation>
        <location evidence="1">Cell inner membrane</location>
        <topology evidence="1">Peripheral membrane protein</topology>
        <orientation evidence="1">Cytoplasmic side</orientation>
    </subcellularLocation>
</comment>
<comment type="similarity">
    <text evidence="1">Belongs to the TRAFAC class translation factor GTPase superfamily. Classic translation factor GTPase family. LepA subfamily.</text>
</comment>
<gene>
    <name evidence="1" type="primary">lepA</name>
    <name type="ordered locus">CCA_00433</name>
</gene>
<feature type="chain" id="PRO_0000176255" description="Elongation factor 4">
    <location>
        <begin position="1"/>
        <end position="602"/>
    </location>
</feature>
<feature type="domain" description="tr-type G">
    <location>
        <begin position="7"/>
        <end position="188"/>
    </location>
</feature>
<feature type="binding site" evidence="1">
    <location>
        <begin position="19"/>
        <end position="24"/>
    </location>
    <ligand>
        <name>GTP</name>
        <dbReference type="ChEBI" id="CHEBI:37565"/>
    </ligand>
</feature>
<feature type="binding site" evidence="1">
    <location>
        <begin position="135"/>
        <end position="138"/>
    </location>
    <ligand>
        <name>GTP</name>
        <dbReference type="ChEBI" id="CHEBI:37565"/>
    </ligand>
</feature>